<keyword id="KW-0998">Cell outer membrane</keyword>
<keyword id="KW-0472">Membrane</keyword>
<keyword id="KW-0677">Repeat</keyword>
<keyword id="KW-0732">Signal</keyword>
<keyword id="KW-0812">Transmembrane</keyword>
<keyword id="KW-1134">Transmembrane beta strand</keyword>
<gene>
    <name evidence="1" type="primary">bamA</name>
    <name type="synonym">yaeT</name>
    <name type="ordered locus">ECSE_0176</name>
</gene>
<feature type="signal peptide" evidence="1">
    <location>
        <begin position="1"/>
        <end position="20"/>
    </location>
</feature>
<feature type="chain" id="PRO_1000145776" description="Outer membrane protein assembly factor BamA">
    <location>
        <begin position="21"/>
        <end position="810"/>
    </location>
</feature>
<feature type="domain" description="POTRA 1" evidence="2">
    <location>
        <begin position="24"/>
        <end position="91"/>
    </location>
</feature>
<feature type="domain" description="POTRA 2" evidence="2">
    <location>
        <begin position="92"/>
        <end position="172"/>
    </location>
</feature>
<feature type="domain" description="POTRA 3" evidence="2">
    <location>
        <begin position="175"/>
        <end position="263"/>
    </location>
</feature>
<feature type="domain" description="POTRA 4" evidence="2">
    <location>
        <begin position="266"/>
        <end position="344"/>
    </location>
</feature>
<feature type="domain" description="POTRA 5" evidence="2">
    <location>
        <begin position="347"/>
        <end position="421"/>
    </location>
</feature>
<reference key="1">
    <citation type="journal article" date="2008" name="DNA Res.">
        <title>Complete genome sequence and comparative analysis of the wild-type commensal Escherichia coli strain SE11 isolated from a healthy adult.</title>
        <authorList>
            <person name="Oshima K."/>
            <person name="Toh H."/>
            <person name="Ogura Y."/>
            <person name="Sasamoto H."/>
            <person name="Morita H."/>
            <person name="Park S.-H."/>
            <person name="Ooka T."/>
            <person name="Iyoda S."/>
            <person name="Taylor T.D."/>
            <person name="Hayashi T."/>
            <person name="Itoh K."/>
            <person name="Hattori M."/>
        </authorList>
    </citation>
    <scope>NUCLEOTIDE SEQUENCE [LARGE SCALE GENOMIC DNA]</scope>
    <source>
        <strain>SE11</strain>
    </source>
</reference>
<organism>
    <name type="scientific">Escherichia coli (strain SE11)</name>
    <dbReference type="NCBI Taxonomy" id="409438"/>
    <lineage>
        <taxon>Bacteria</taxon>
        <taxon>Pseudomonadati</taxon>
        <taxon>Pseudomonadota</taxon>
        <taxon>Gammaproteobacteria</taxon>
        <taxon>Enterobacterales</taxon>
        <taxon>Enterobacteriaceae</taxon>
        <taxon>Escherichia</taxon>
    </lineage>
</organism>
<accession>B6HZF1</accession>
<protein>
    <recommendedName>
        <fullName evidence="1">Outer membrane protein assembly factor BamA</fullName>
    </recommendedName>
</protein>
<comment type="function">
    <text evidence="1">Part of the outer membrane protein assembly complex, which is involved in assembly and insertion of beta-barrel proteins into the outer membrane. Constitutes, with BamD, the core component of the assembly machinery.</text>
</comment>
<comment type="subunit">
    <text evidence="1">Part of the Bam complex, which is composed of the outer membrane protein BamA, and four lipoproteins BamB, BamC, BamD and BamE.</text>
</comment>
<comment type="subcellular location">
    <subcellularLocation>
        <location evidence="1">Cell outer membrane</location>
    </subcellularLocation>
</comment>
<comment type="similarity">
    <text evidence="1">Belongs to the BamA family.</text>
</comment>
<dbReference type="EMBL" id="AP009240">
    <property type="protein sequence ID" value="BAG75700.1"/>
    <property type="molecule type" value="Genomic_DNA"/>
</dbReference>
<dbReference type="RefSeq" id="WP_001240896.1">
    <property type="nucleotide sequence ID" value="NC_011415.1"/>
</dbReference>
<dbReference type="SMR" id="B6HZF1"/>
<dbReference type="GeneID" id="93777248"/>
<dbReference type="KEGG" id="ecy:ECSE_0176"/>
<dbReference type="HOGENOM" id="CLU_007664_1_0_6"/>
<dbReference type="Proteomes" id="UP000008199">
    <property type="component" value="Chromosome"/>
</dbReference>
<dbReference type="GO" id="GO:1990063">
    <property type="term" value="C:Bam protein complex"/>
    <property type="evidence" value="ECO:0007669"/>
    <property type="project" value="TreeGrafter"/>
</dbReference>
<dbReference type="GO" id="GO:0043165">
    <property type="term" value="P:Gram-negative-bacterium-type cell outer membrane assembly"/>
    <property type="evidence" value="ECO:0007669"/>
    <property type="project" value="UniProtKB-UniRule"/>
</dbReference>
<dbReference type="GO" id="GO:0051205">
    <property type="term" value="P:protein insertion into membrane"/>
    <property type="evidence" value="ECO:0007669"/>
    <property type="project" value="UniProtKB-UniRule"/>
</dbReference>
<dbReference type="FunFam" id="2.40.160.50:FF:000001">
    <property type="entry name" value="Outer membrane protein assembly factor BamA"/>
    <property type="match status" value="1"/>
</dbReference>
<dbReference type="FunFam" id="3.10.20.310:FF:000001">
    <property type="entry name" value="Outer membrane protein assembly factor BamA"/>
    <property type="match status" value="1"/>
</dbReference>
<dbReference type="FunFam" id="3.10.20.310:FF:000002">
    <property type="entry name" value="Outer membrane protein assembly factor BamA"/>
    <property type="match status" value="1"/>
</dbReference>
<dbReference type="FunFam" id="3.10.20.310:FF:000003">
    <property type="entry name" value="Outer membrane protein assembly factor BamA"/>
    <property type="match status" value="1"/>
</dbReference>
<dbReference type="FunFam" id="3.10.20.310:FF:000004">
    <property type="entry name" value="Outer membrane protein assembly factor BamA"/>
    <property type="match status" value="1"/>
</dbReference>
<dbReference type="FunFam" id="3.10.20.310:FF:000005">
    <property type="entry name" value="Outer membrane protein assembly factor BamA"/>
    <property type="match status" value="1"/>
</dbReference>
<dbReference type="Gene3D" id="3.10.20.310">
    <property type="entry name" value="membrane protein fhac"/>
    <property type="match status" value="5"/>
</dbReference>
<dbReference type="Gene3D" id="2.40.160.50">
    <property type="entry name" value="membrane protein fhac: a member of the omp85/tpsb transporter family"/>
    <property type="match status" value="1"/>
</dbReference>
<dbReference type="HAMAP" id="MF_01430">
    <property type="entry name" value="OM_assembly_BamA"/>
    <property type="match status" value="1"/>
</dbReference>
<dbReference type="InterPro" id="IPR000184">
    <property type="entry name" value="Bac_surfAg_D15"/>
</dbReference>
<dbReference type="InterPro" id="IPR010827">
    <property type="entry name" value="BamA/TamA_POTRA"/>
</dbReference>
<dbReference type="InterPro" id="IPR039910">
    <property type="entry name" value="D15-like"/>
</dbReference>
<dbReference type="InterPro" id="IPR023707">
    <property type="entry name" value="OM_assembly_BamA"/>
</dbReference>
<dbReference type="InterPro" id="IPR034746">
    <property type="entry name" value="POTRA"/>
</dbReference>
<dbReference type="NCBIfam" id="TIGR03303">
    <property type="entry name" value="OM_YaeT"/>
    <property type="match status" value="1"/>
</dbReference>
<dbReference type="NCBIfam" id="NF008287">
    <property type="entry name" value="PRK11067.1"/>
    <property type="match status" value="1"/>
</dbReference>
<dbReference type="PANTHER" id="PTHR12815:SF23">
    <property type="entry name" value="OUTER MEMBRANE PROTEIN ASSEMBLY FACTOR BAMA"/>
    <property type="match status" value="1"/>
</dbReference>
<dbReference type="PANTHER" id="PTHR12815">
    <property type="entry name" value="SORTING AND ASSEMBLY MACHINERY SAMM50 PROTEIN FAMILY MEMBER"/>
    <property type="match status" value="1"/>
</dbReference>
<dbReference type="Pfam" id="PF01103">
    <property type="entry name" value="Omp85"/>
    <property type="match status" value="1"/>
</dbReference>
<dbReference type="Pfam" id="PF07244">
    <property type="entry name" value="POTRA"/>
    <property type="match status" value="4"/>
</dbReference>
<dbReference type="PIRSF" id="PIRSF006076">
    <property type="entry name" value="OM_assembly_OMP85"/>
    <property type="match status" value="1"/>
</dbReference>
<dbReference type="PROSITE" id="PS51779">
    <property type="entry name" value="POTRA"/>
    <property type="match status" value="5"/>
</dbReference>
<sequence length="810" mass="90553">MAMKKLLIASLLFSSATVYGAEGFVVKDIHFEGLQRVAVGAALLSMPVRTGDTVNDEDISNTIRALFATGNFEDVRVLRDGDTLLVQVKERPTIASITFSGNKSVKDDMLKQNLEASGVRVGESLDRTTIADIEKGLEDFYYSVGKYSASVKAVVTPLPRNRVDLKLVFQEGVSAEIQQINIVGNHAFTTDELISHFQLRDEVPWWNVVGDRKYQKQKLAGDLETLRSYYLDRGYARFNIDSTQVSLTPDKKGIYVTVNITEGDQYKLSGVEVSGNLAGHSAEIEQLTKIEPGELYNGTKVTKMEDDIKKLLGRYGYAYPRVQSMPEINDADKTVKLRVNVDAGNRFYVRKIRFEGNDTSKDAVLRREMRQMEGAWLGSDLVDQGKERLNRLGFFETVDTDTQRVPGSPDQVDVVYKVKERNTGSFNFGIGYGTESGVSFQAGVQQDNWLGTGYAVGINGTKNDYQTYAELSVTNPYFTVDGVSLGGRLFYNDFQADDADLSDYTNKSYGTDVTLGFPINEYNSLRAGLGYVHNSLSNMQPQVAMWRYLYSMGEHPSTSDQDNSFKTDDFTFNYGWTYNKLDRGYFPTDGSRVNLTGKVTIPGSDNEYYKVTLDTATYVPIDDDHKWVVLGRTRWGYGDGLGGKEMPFYENFYAGGSSTVRGFQSNTIGPKAVYFPHQASNYDPDYDYECATQDGAKDLCKSDDAVGGNAMAVASLEFITPTPFISDKYANSVRTSFFWDMGTVWDTNWDSSQYSGYPDYSDPSNIRMSAGIALQWMSPLGPLVFSYAQPFKKYDGDKAEQFQFNIGKTW</sequence>
<evidence type="ECO:0000255" key="1">
    <source>
        <dbReference type="HAMAP-Rule" id="MF_01430"/>
    </source>
</evidence>
<evidence type="ECO:0000255" key="2">
    <source>
        <dbReference type="PROSITE-ProRule" id="PRU01115"/>
    </source>
</evidence>
<proteinExistence type="inferred from homology"/>
<name>BAMA_ECOSE</name>